<gene>
    <name evidence="1" type="primary">proB</name>
    <name type="ordered locus">BC_2975</name>
</gene>
<sequence length="367" mass="39400">MKKQRVVVKIGSSSLADSHGGISTEQLSDHVAALARLKEDGHEVVLITSGAVAAGFSALGYPSRPVTIKGKQAAAAVGQSLLMQAYTEEFRKYGIVTAQLLLTRSDFSRKEQYSNAYATLGELLNRSALPIINENDSISLEELTFGDNDMLSALVSGLVSADMLMIFTDVNGLYDKNPQKNADAKKYYFLPEVTEEISSLAGDAGSKLGTGGMKSKIDAAKTALSLGVSVFIGTGRGQEKFVNVLKGKGDGTYVGNAPQKEMKMNKQWIALHSLVSGQIEVDAGAATAIIQHGKSLLPAGVTNVSRFFQVGEVVEVVTQQGRVIGKGQCTYSAEELIDVKGMQSQDIQVRGERHSYEVIHRDHWVSL</sequence>
<organism>
    <name type="scientific">Bacillus cereus (strain ATCC 14579 / DSM 31 / CCUG 7414 / JCM 2152 / NBRC 15305 / NCIMB 9373 / NCTC 2599 / NRRL B-3711)</name>
    <dbReference type="NCBI Taxonomy" id="226900"/>
    <lineage>
        <taxon>Bacteria</taxon>
        <taxon>Bacillati</taxon>
        <taxon>Bacillota</taxon>
        <taxon>Bacilli</taxon>
        <taxon>Bacillales</taxon>
        <taxon>Bacillaceae</taxon>
        <taxon>Bacillus</taxon>
        <taxon>Bacillus cereus group</taxon>
    </lineage>
</organism>
<comment type="function">
    <text evidence="1">Catalyzes the transfer of a phosphate group to glutamate to form L-glutamate 5-phosphate.</text>
</comment>
<comment type="catalytic activity">
    <reaction evidence="1">
        <text>L-glutamate + ATP = L-glutamyl 5-phosphate + ADP</text>
        <dbReference type="Rhea" id="RHEA:14877"/>
        <dbReference type="ChEBI" id="CHEBI:29985"/>
        <dbReference type="ChEBI" id="CHEBI:30616"/>
        <dbReference type="ChEBI" id="CHEBI:58274"/>
        <dbReference type="ChEBI" id="CHEBI:456216"/>
        <dbReference type="EC" id="2.7.2.11"/>
    </reaction>
</comment>
<comment type="pathway">
    <text evidence="1">Amino-acid biosynthesis; L-proline biosynthesis; L-glutamate 5-semialdehyde from L-glutamate: step 1/2.</text>
</comment>
<comment type="subcellular location">
    <subcellularLocation>
        <location evidence="1">Cytoplasm</location>
    </subcellularLocation>
</comment>
<comment type="similarity">
    <text evidence="1">Belongs to the glutamate 5-kinase family.</text>
</comment>
<accession>Q81C10</accession>
<evidence type="ECO:0000255" key="1">
    <source>
        <dbReference type="HAMAP-Rule" id="MF_00456"/>
    </source>
</evidence>
<name>PROB_BACCR</name>
<keyword id="KW-0028">Amino-acid biosynthesis</keyword>
<keyword id="KW-0067">ATP-binding</keyword>
<keyword id="KW-0963">Cytoplasm</keyword>
<keyword id="KW-0418">Kinase</keyword>
<keyword id="KW-0547">Nucleotide-binding</keyword>
<keyword id="KW-0641">Proline biosynthesis</keyword>
<keyword id="KW-1185">Reference proteome</keyword>
<keyword id="KW-0808">Transferase</keyword>
<feature type="chain" id="PRO_0000109634" description="Glutamate 5-kinase">
    <location>
        <begin position="1"/>
        <end position="367"/>
    </location>
</feature>
<feature type="domain" description="PUA" evidence="1">
    <location>
        <begin position="276"/>
        <end position="350"/>
    </location>
</feature>
<feature type="binding site" evidence="1">
    <location>
        <position position="9"/>
    </location>
    <ligand>
        <name>ATP</name>
        <dbReference type="ChEBI" id="CHEBI:30616"/>
    </ligand>
</feature>
<feature type="binding site" evidence="1">
    <location>
        <position position="49"/>
    </location>
    <ligand>
        <name>substrate</name>
    </ligand>
</feature>
<feature type="binding site" evidence="1">
    <location>
        <position position="136"/>
    </location>
    <ligand>
        <name>substrate</name>
    </ligand>
</feature>
<feature type="binding site" evidence="1">
    <location>
        <position position="148"/>
    </location>
    <ligand>
        <name>substrate</name>
    </ligand>
</feature>
<feature type="binding site" evidence="1">
    <location>
        <begin position="168"/>
        <end position="169"/>
    </location>
    <ligand>
        <name>ATP</name>
        <dbReference type="ChEBI" id="CHEBI:30616"/>
    </ligand>
</feature>
<feature type="binding site" evidence="1">
    <location>
        <begin position="210"/>
        <end position="216"/>
    </location>
    <ligand>
        <name>ATP</name>
        <dbReference type="ChEBI" id="CHEBI:30616"/>
    </ligand>
</feature>
<proteinExistence type="inferred from homology"/>
<reference key="1">
    <citation type="journal article" date="2003" name="Nature">
        <title>Genome sequence of Bacillus cereus and comparative analysis with Bacillus anthracis.</title>
        <authorList>
            <person name="Ivanova N."/>
            <person name="Sorokin A."/>
            <person name="Anderson I."/>
            <person name="Galleron N."/>
            <person name="Candelon B."/>
            <person name="Kapatral V."/>
            <person name="Bhattacharyya A."/>
            <person name="Reznik G."/>
            <person name="Mikhailova N."/>
            <person name="Lapidus A."/>
            <person name="Chu L."/>
            <person name="Mazur M."/>
            <person name="Goltsman E."/>
            <person name="Larsen N."/>
            <person name="D'Souza M."/>
            <person name="Walunas T."/>
            <person name="Grechkin Y."/>
            <person name="Pusch G."/>
            <person name="Haselkorn R."/>
            <person name="Fonstein M."/>
            <person name="Ehrlich S.D."/>
            <person name="Overbeek R."/>
            <person name="Kyrpides N.C."/>
        </authorList>
    </citation>
    <scope>NUCLEOTIDE SEQUENCE [LARGE SCALE GENOMIC DNA]</scope>
    <source>
        <strain>ATCC 14579 / DSM 31 / CCUG 7414 / JCM 2152 / NBRC 15305 / NCIMB 9373 / NCTC 2599 / NRRL B-3711</strain>
    </source>
</reference>
<dbReference type="EC" id="2.7.2.11" evidence="1"/>
<dbReference type="EMBL" id="AE016877">
    <property type="protein sequence ID" value="AAP09922.1"/>
    <property type="molecule type" value="Genomic_DNA"/>
</dbReference>
<dbReference type="RefSeq" id="NP_832721.1">
    <property type="nucleotide sequence ID" value="NC_004722.1"/>
</dbReference>
<dbReference type="RefSeq" id="WP_000744805.1">
    <property type="nucleotide sequence ID" value="NC_004722.1"/>
</dbReference>
<dbReference type="SMR" id="Q81C10"/>
<dbReference type="STRING" id="226900.BC_2975"/>
<dbReference type="KEGG" id="bce:BC2975"/>
<dbReference type="PATRIC" id="fig|226900.8.peg.3052"/>
<dbReference type="HOGENOM" id="CLU_025400_2_0_9"/>
<dbReference type="UniPathway" id="UPA00098">
    <property type="reaction ID" value="UER00359"/>
</dbReference>
<dbReference type="Proteomes" id="UP000001417">
    <property type="component" value="Chromosome"/>
</dbReference>
<dbReference type="GO" id="GO:0005829">
    <property type="term" value="C:cytosol"/>
    <property type="evidence" value="ECO:0000318"/>
    <property type="project" value="GO_Central"/>
</dbReference>
<dbReference type="GO" id="GO:0005524">
    <property type="term" value="F:ATP binding"/>
    <property type="evidence" value="ECO:0007669"/>
    <property type="project" value="UniProtKB-KW"/>
</dbReference>
<dbReference type="GO" id="GO:0004349">
    <property type="term" value="F:glutamate 5-kinase activity"/>
    <property type="evidence" value="ECO:0000318"/>
    <property type="project" value="GO_Central"/>
</dbReference>
<dbReference type="GO" id="GO:0003723">
    <property type="term" value="F:RNA binding"/>
    <property type="evidence" value="ECO:0007669"/>
    <property type="project" value="InterPro"/>
</dbReference>
<dbReference type="GO" id="GO:0055129">
    <property type="term" value="P:L-proline biosynthetic process"/>
    <property type="evidence" value="ECO:0007669"/>
    <property type="project" value="UniProtKB-UniRule"/>
</dbReference>
<dbReference type="GO" id="GO:0006561">
    <property type="term" value="P:proline biosynthetic process"/>
    <property type="evidence" value="ECO:0000318"/>
    <property type="project" value="GO_Central"/>
</dbReference>
<dbReference type="CDD" id="cd04242">
    <property type="entry name" value="AAK_G5K_ProB"/>
    <property type="match status" value="1"/>
</dbReference>
<dbReference type="CDD" id="cd21157">
    <property type="entry name" value="PUA_G5K"/>
    <property type="match status" value="1"/>
</dbReference>
<dbReference type="FunFam" id="2.30.130.10:FF:000007">
    <property type="entry name" value="Glutamate 5-kinase"/>
    <property type="match status" value="1"/>
</dbReference>
<dbReference type="FunFam" id="3.40.1160.10:FF:000018">
    <property type="entry name" value="Glutamate 5-kinase"/>
    <property type="match status" value="1"/>
</dbReference>
<dbReference type="Gene3D" id="3.40.1160.10">
    <property type="entry name" value="Acetylglutamate kinase-like"/>
    <property type="match status" value="1"/>
</dbReference>
<dbReference type="Gene3D" id="2.30.130.10">
    <property type="entry name" value="PUA domain"/>
    <property type="match status" value="1"/>
</dbReference>
<dbReference type="HAMAP" id="MF_00456">
    <property type="entry name" value="ProB"/>
    <property type="match status" value="1"/>
</dbReference>
<dbReference type="InterPro" id="IPR036393">
    <property type="entry name" value="AceGlu_kinase-like_sf"/>
</dbReference>
<dbReference type="InterPro" id="IPR001048">
    <property type="entry name" value="Asp/Glu/Uridylate_kinase"/>
</dbReference>
<dbReference type="InterPro" id="IPR041739">
    <property type="entry name" value="G5K_ProB"/>
</dbReference>
<dbReference type="InterPro" id="IPR001057">
    <property type="entry name" value="Glu/AcGlu_kinase"/>
</dbReference>
<dbReference type="InterPro" id="IPR011529">
    <property type="entry name" value="Glu_5kinase"/>
</dbReference>
<dbReference type="InterPro" id="IPR005715">
    <property type="entry name" value="Glu_5kinase/COase_Synthase"/>
</dbReference>
<dbReference type="InterPro" id="IPR019797">
    <property type="entry name" value="Glutamate_5-kinase_CS"/>
</dbReference>
<dbReference type="InterPro" id="IPR002478">
    <property type="entry name" value="PUA"/>
</dbReference>
<dbReference type="InterPro" id="IPR015947">
    <property type="entry name" value="PUA-like_sf"/>
</dbReference>
<dbReference type="InterPro" id="IPR036974">
    <property type="entry name" value="PUA_sf"/>
</dbReference>
<dbReference type="NCBIfam" id="TIGR01027">
    <property type="entry name" value="proB"/>
    <property type="match status" value="1"/>
</dbReference>
<dbReference type="PANTHER" id="PTHR43654">
    <property type="entry name" value="GLUTAMATE 5-KINASE"/>
    <property type="match status" value="1"/>
</dbReference>
<dbReference type="PANTHER" id="PTHR43654:SF1">
    <property type="entry name" value="ISOPENTENYL PHOSPHATE KINASE"/>
    <property type="match status" value="1"/>
</dbReference>
<dbReference type="Pfam" id="PF00696">
    <property type="entry name" value="AA_kinase"/>
    <property type="match status" value="1"/>
</dbReference>
<dbReference type="Pfam" id="PF01472">
    <property type="entry name" value="PUA"/>
    <property type="match status" value="1"/>
</dbReference>
<dbReference type="PIRSF" id="PIRSF000729">
    <property type="entry name" value="GK"/>
    <property type="match status" value="1"/>
</dbReference>
<dbReference type="PRINTS" id="PR00474">
    <property type="entry name" value="GLU5KINASE"/>
</dbReference>
<dbReference type="SMART" id="SM00359">
    <property type="entry name" value="PUA"/>
    <property type="match status" value="1"/>
</dbReference>
<dbReference type="SUPFAM" id="SSF53633">
    <property type="entry name" value="Carbamate kinase-like"/>
    <property type="match status" value="1"/>
</dbReference>
<dbReference type="SUPFAM" id="SSF88697">
    <property type="entry name" value="PUA domain-like"/>
    <property type="match status" value="1"/>
</dbReference>
<dbReference type="PROSITE" id="PS00902">
    <property type="entry name" value="GLUTAMATE_5_KINASE"/>
    <property type="match status" value="1"/>
</dbReference>
<dbReference type="PROSITE" id="PS50890">
    <property type="entry name" value="PUA"/>
    <property type="match status" value="1"/>
</dbReference>
<protein>
    <recommendedName>
        <fullName evidence="1">Glutamate 5-kinase</fullName>
        <ecNumber evidence="1">2.7.2.11</ecNumber>
    </recommendedName>
    <alternativeName>
        <fullName evidence="1">Gamma-glutamyl kinase</fullName>
        <shortName evidence="1">GK</shortName>
    </alternativeName>
</protein>